<dbReference type="EC" id="2.3.1.225" evidence="2"/>
<dbReference type="EMBL" id="AACD01000080">
    <property type="protein sequence ID" value="EAA60805.1"/>
    <property type="status" value="ALT_SEQ"/>
    <property type="molecule type" value="Genomic_DNA"/>
</dbReference>
<dbReference type="EMBL" id="BN001303">
    <property type="protein sequence ID" value="CBF76837.1"/>
    <property type="status" value="ALT_SEQ"/>
    <property type="molecule type" value="Genomic_DNA"/>
</dbReference>
<dbReference type="RefSeq" id="XP_662367.1">
    <property type="nucleotide sequence ID" value="XM_657275.1"/>
</dbReference>
<dbReference type="SMR" id="Q5B3W7"/>
<dbReference type="FunCoup" id="Q5B3W7">
    <property type="interactions" value="168"/>
</dbReference>
<dbReference type="STRING" id="227321.Q5B3W7"/>
<dbReference type="KEGG" id="ani:ANIA_04763"/>
<dbReference type="eggNOG" id="KOG1311">
    <property type="taxonomic scope" value="Eukaryota"/>
</dbReference>
<dbReference type="HOGENOM" id="CLU_021757_0_0_1"/>
<dbReference type="InParanoid" id="Q5B3W7"/>
<dbReference type="OrthoDB" id="9909019at2759"/>
<dbReference type="Proteomes" id="UP000000560">
    <property type="component" value="Chromosome III"/>
</dbReference>
<dbReference type="GO" id="GO:0005783">
    <property type="term" value="C:endoplasmic reticulum"/>
    <property type="evidence" value="ECO:0000318"/>
    <property type="project" value="GO_Central"/>
</dbReference>
<dbReference type="GO" id="GO:0005789">
    <property type="term" value="C:endoplasmic reticulum membrane"/>
    <property type="evidence" value="ECO:0007669"/>
    <property type="project" value="UniProtKB-SubCell"/>
</dbReference>
<dbReference type="GO" id="GO:0005794">
    <property type="term" value="C:Golgi apparatus"/>
    <property type="evidence" value="ECO:0000318"/>
    <property type="project" value="GO_Central"/>
</dbReference>
<dbReference type="GO" id="GO:0019706">
    <property type="term" value="F:protein-cysteine S-palmitoyltransferase activity"/>
    <property type="evidence" value="ECO:0000318"/>
    <property type="project" value="GO_Central"/>
</dbReference>
<dbReference type="GO" id="GO:0006612">
    <property type="term" value="P:protein targeting to membrane"/>
    <property type="evidence" value="ECO:0000318"/>
    <property type="project" value="GO_Central"/>
</dbReference>
<dbReference type="InterPro" id="IPR001594">
    <property type="entry name" value="Palmitoyltrfase_DHHC"/>
</dbReference>
<dbReference type="InterPro" id="IPR039859">
    <property type="entry name" value="PFA4/ZDH16/20/ERF2-like"/>
</dbReference>
<dbReference type="PANTHER" id="PTHR22883:SF43">
    <property type="entry name" value="PALMITOYLTRANSFERASE APP"/>
    <property type="match status" value="1"/>
</dbReference>
<dbReference type="PANTHER" id="PTHR22883">
    <property type="entry name" value="ZINC FINGER DHHC DOMAIN CONTAINING PROTEIN"/>
    <property type="match status" value="1"/>
</dbReference>
<dbReference type="Pfam" id="PF01529">
    <property type="entry name" value="DHHC"/>
    <property type="match status" value="1"/>
</dbReference>
<dbReference type="PROSITE" id="PS50216">
    <property type="entry name" value="DHHC"/>
    <property type="match status" value="1"/>
</dbReference>
<comment type="function">
    <text evidence="1">Palmitoyltransferase specific for Ras proteins.</text>
</comment>
<comment type="catalytic activity">
    <reaction evidence="2">
        <text>L-cysteinyl-[protein] + hexadecanoyl-CoA = S-hexadecanoyl-L-cysteinyl-[protein] + CoA</text>
        <dbReference type="Rhea" id="RHEA:36683"/>
        <dbReference type="Rhea" id="RHEA-COMP:10131"/>
        <dbReference type="Rhea" id="RHEA-COMP:11032"/>
        <dbReference type="ChEBI" id="CHEBI:29950"/>
        <dbReference type="ChEBI" id="CHEBI:57287"/>
        <dbReference type="ChEBI" id="CHEBI:57379"/>
        <dbReference type="ChEBI" id="CHEBI:74151"/>
        <dbReference type="EC" id="2.3.1.225"/>
    </reaction>
</comment>
<comment type="subcellular location">
    <subcellularLocation>
        <location evidence="1">Endoplasmic reticulum membrane</location>
        <topology evidence="1">Multi-pass membrane protein</topology>
    </subcellularLocation>
</comment>
<comment type="domain">
    <text evidence="1">The DHHC domain is required for palmitoyltransferase activity.</text>
</comment>
<comment type="PTM">
    <text evidence="3">Autopalmitoylated.</text>
</comment>
<comment type="similarity">
    <text evidence="7">Belongs to the DHHC palmitoyltransferase family. ERF2/ZDHHC9 subfamily.</text>
</comment>
<comment type="sequence caution" evidence="7">
    <conflict type="erroneous gene model prediction">
        <sequence resource="EMBL-CDS" id="CBF76837"/>
    </conflict>
</comment>
<comment type="sequence caution" evidence="7">
    <conflict type="erroneous gene model prediction">
        <sequence resource="EMBL-CDS" id="EAA60805"/>
    </conflict>
</comment>
<feature type="chain" id="PRO_0000212942" description="Palmitoyltransferase erf2">
    <location>
        <begin position="1"/>
        <end position="601"/>
    </location>
</feature>
<feature type="topological domain" description="Cytoplasmic" evidence="4">
    <location>
        <begin position="1"/>
        <end position="300"/>
    </location>
</feature>
<feature type="transmembrane region" description="Helical" evidence="4">
    <location>
        <begin position="301"/>
        <end position="321"/>
    </location>
</feature>
<feature type="topological domain" description="Lumenal" evidence="4">
    <location>
        <begin position="322"/>
        <end position="325"/>
    </location>
</feature>
<feature type="transmembrane region" description="Helical" evidence="4">
    <location>
        <begin position="326"/>
        <end position="346"/>
    </location>
</feature>
<feature type="topological domain" description="Cytoplasmic" evidence="4">
    <location>
        <begin position="347"/>
        <end position="444"/>
    </location>
</feature>
<feature type="transmembrane region" description="Helical" evidence="4">
    <location>
        <begin position="445"/>
        <end position="465"/>
    </location>
</feature>
<feature type="topological domain" description="Lumenal" evidence="4">
    <location>
        <begin position="466"/>
        <end position="486"/>
    </location>
</feature>
<feature type="transmembrane region" description="Helical" evidence="4">
    <location>
        <begin position="487"/>
        <end position="507"/>
    </location>
</feature>
<feature type="topological domain" description="Cytoplasmic" evidence="4">
    <location>
        <begin position="508"/>
        <end position="601"/>
    </location>
</feature>
<feature type="domain" description="DHHC" evidence="5">
    <location>
        <begin position="400"/>
        <end position="450"/>
    </location>
</feature>
<feature type="region of interest" description="Disordered" evidence="6">
    <location>
        <begin position="1"/>
        <end position="95"/>
    </location>
</feature>
<feature type="region of interest" description="Disordered" evidence="6">
    <location>
        <begin position="112"/>
        <end position="268"/>
    </location>
</feature>
<feature type="region of interest" description="Disordered" evidence="6">
    <location>
        <begin position="582"/>
        <end position="601"/>
    </location>
</feature>
<feature type="compositionally biased region" description="Low complexity" evidence="6">
    <location>
        <begin position="1"/>
        <end position="18"/>
    </location>
</feature>
<feature type="compositionally biased region" description="Polar residues" evidence="6">
    <location>
        <begin position="74"/>
        <end position="92"/>
    </location>
</feature>
<feature type="compositionally biased region" description="Polar residues" evidence="6">
    <location>
        <begin position="123"/>
        <end position="155"/>
    </location>
</feature>
<feature type="compositionally biased region" description="Polar residues" evidence="6">
    <location>
        <begin position="179"/>
        <end position="195"/>
    </location>
</feature>
<feature type="compositionally biased region" description="Basic and acidic residues" evidence="6">
    <location>
        <begin position="198"/>
        <end position="223"/>
    </location>
</feature>
<feature type="active site" description="S-palmitoyl cysteine intermediate" evidence="2">
    <location>
        <position position="430"/>
    </location>
</feature>
<organism>
    <name type="scientific">Emericella nidulans (strain FGSC A4 / ATCC 38163 / CBS 112.46 / NRRL 194 / M139)</name>
    <name type="common">Aspergillus nidulans</name>
    <dbReference type="NCBI Taxonomy" id="227321"/>
    <lineage>
        <taxon>Eukaryota</taxon>
        <taxon>Fungi</taxon>
        <taxon>Dikarya</taxon>
        <taxon>Ascomycota</taxon>
        <taxon>Pezizomycotina</taxon>
        <taxon>Eurotiomycetes</taxon>
        <taxon>Eurotiomycetidae</taxon>
        <taxon>Eurotiales</taxon>
        <taxon>Aspergillaceae</taxon>
        <taxon>Aspergillus</taxon>
        <taxon>Aspergillus subgen. Nidulantes</taxon>
    </lineage>
</organism>
<keyword id="KW-0012">Acyltransferase</keyword>
<keyword id="KW-0256">Endoplasmic reticulum</keyword>
<keyword id="KW-0449">Lipoprotein</keyword>
<keyword id="KW-0472">Membrane</keyword>
<keyword id="KW-0564">Palmitate</keyword>
<keyword id="KW-1185">Reference proteome</keyword>
<keyword id="KW-0808">Transferase</keyword>
<keyword id="KW-0812">Transmembrane</keyword>
<keyword id="KW-1133">Transmembrane helix</keyword>
<name>ERFB_EMENI</name>
<proteinExistence type="inferred from homology"/>
<reference key="1">
    <citation type="journal article" date="2005" name="Nature">
        <title>Sequencing of Aspergillus nidulans and comparative analysis with A. fumigatus and A. oryzae.</title>
        <authorList>
            <person name="Galagan J.E."/>
            <person name="Calvo S.E."/>
            <person name="Cuomo C."/>
            <person name="Ma L.-J."/>
            <person name="Wortman J.R."/>
            <person name="Batzoglou S."/>
            <person name="Lee S.-I."/>
            <person name="Bastuerkmen M."/>
            <person name="Spevak C.C."/>
            <person name="Clutterbuck J."/>
            <person name="Kapitonov V."/>
            <person name="Jurka J."/>
            <person name="Scazzocchio C."/>
            <person name="Farman M.L."/>
            <person name="Butler J."/>
            <person name="Purcell S."/>
            <person name="Harris S."/>
            <person name="Braus G.H."/>
            <person name="Draht O."/>
            <person name="Busch S."/>
            <person name="D'Enfert C."/>
            <person name="Bouchier C."/>
            <person name="Goldman G.H."/>
            <person name="Bell-Pedersen D."/>
            <person name="Griffiths-Jones S."/>
            <person name="Doonan J.H."/>
            <person name="Yu J."/>
            <person name="Vienken K."/>
            <person name="Pain A."/>
            <person name="Freitag M."/>
            <person name="Selker E.U."/>
            <person name="Archer D.B."/>
            <person name="Penalva M.A."/>
            <person name="Oakley B.R."/>
            <person name="Momany M."/>
            <person name="Tanaka T."/>
            <person name="Kumagai T."/>
            <person name="Asai K."/>
            <person name="Machida M."/>
            <person name="Nierman W.C."/>
            <person name="Denning D.W."/>
            <person name="Caddick M.X."/>
            <person name="Hynes M."/>
            <person name="Paoletti M."/>
            <person name="Fischer R."/>
            <person name="Miller B.L."/>
            <person name="Dyer P.S."/>
            <person name="Sachs M.S."/>
            <person name="Osmani S.A."/>
            <person name="Birren B.W."/>
        </authorList>
    </citation>
    <scope>NUCLEOTIDE SEQUENCE [LARGE SCALE GENOMIC DNA]</scope>
    <source>
        <strain>FGSC A4 / ATCC 38163 / CBS 112.46 / NRRL 194 / M139</strain>
    </source>
</reference>
<reference key="2">
    <citation type="journal article" date="2009" name="Fungal Genet. Biol.">
        <title>The 2008 update of the Aspergillus nidulans genome annotation: a community effort.</title>
        <authorList>
            <person name="Wortman J.R."/>
            <person name="Gilsenan J.M."/>
            <person name="Joardar V."/>
            <person name="Deegan J."/>
            <person name="Clutterbuck J."/>
            <person name="Andersen M.R."/>
            <person name="Archer D."/>
            <person name="Bencina M."/>
            <person name="Braus G."/>
            <person name="Coutinho P."/>
            <person name="von Dohren H."/>
            <person name="Doonan J."/>
            <person name="Driessen A.J."/>
            <person name="Durek P."/>
            <person name="Espeso E."/>
            <person name="Fekete E."/>
            <person name="Flipphi M."/>
            <person name="Estrada C.G."/>
            <person name="Geysens S."/>
            <person name="Goldman G."/>
            <person name="de Groot P.W."/>
            <person name="Hansen K."/>
            <person name="Harris S.D."/>
            <person name="Heinekamp T."/>
            <person name="Helmstaedt K."/>
            <person name="Henrissat B."/>
            <person name="Hofmann G."/>
            <person name="Homan T."/>
            <person name="Horio T."/>
            <person name="Horiuchi H."/>
            <person name="James S."/>
            <person name="Jones M."/>
            <person name="Karaffa L."/>
            <person name="Karanyi Z."/>
            <person name="Kato M."/>
            <person name="Keller N."/>
            <person name="Kelly D.E."/>
            <person name="Kiel J.A."/>
            <person name="Kim J.M."/>
            <person name="van der Klei I.J."/>
            <person name="Klis F.M."/>
            <person name="Kovalchuk A."/>
            <person name="Krasevec N."/>
            <person name="Kubicek C.P."/>
            <person name="Liu B."/>
            <person name="Maccabe A."/>
            <person name="Meyer V."/>
            <person name="Mirabito P."/>
            <person name="Miskei M."/>
            <person name="Mos M."/>
            <person name="Mullins J."/>
            <person name="Nelson D.R."/>
            <person name="Nielsen J."/>
            <person name="Oakley B.R."/>
            <person name="Osmani S.A."/>
            <person name="Pakula T."/>
            <person name="Paszewski A."/>
            <person name="Paulsen I."/>
            <person name="Pilsyk S."/>
            <person name="Pocsi I."/>
            <person name="Punt P.J."/>
            <person name="Ram A.F."/>
            <person name="Ren Q."/>
            <person name="Robellet X."/>
            <person name="Robson G."/>
            <person name="Seiboth B."/>
            <person name="van Solingen P."/>
            <person name="Specht T."/>
            <person name="Sun J."/>
            <person name="Taheri-Talesh N."/>
            <person name="Takeshita N."/>
            <person name="Ussery D."/>
            <person name="vanKuyk P.A."/>
            <person name="Visser H."/>
            <person name="van de Vondervoort P.J."/>
            <person name="de Vries R.P."/>
            <person name="Walton J."/>
            <person name="Xiang X."/>
            <person name="Xiong Y."/>
            <person name="Zeng A.P."/>
            <person name="Brandt B.W."/>
            <person name="Cornell M.J."/>
            <person name="van den Hondel C.A."/>
            <person name="Visser J."/>
            <person name="Oliver S.G."/>
            <person name="Turner G."/>
        </authorList>
    </citation>
    <scope>GENOME REANNOTATION</scope>
    <source>
        <strain>FGSC A4 / ATCC 38163 / CBS 112.46 / NRRL 194 / M139</strain>
    </source>
</reference>
<gene>
    <name type="primary">erf2</name>
    <name type="ORF">AN4763</name>
</gene>
<accession>Q5B3W7</accession>
<accession>C8VAQ9</accession>
<protein>
    <recommendedName>
        <fullName>Palmitoyltransferase erf2</fullName>
        <ecNumber evidence="2">2.3.1.225</ecNumber>
    </recommendedName>
    <alternativeName>
        <fullName>DHHC cysteine-rich domain-containing protein erf2</fullName>
    </alternativeName>
    <alternativeName>
        <fullName>Ras protein acyltransferase</fullName>
    </alternativeName>
</protein>
<evidence type="ECO:0000250" key="1">
    <source>
        <dbReference type="UniProtKB" id="Q06551"/>
    </source>
</evidence>
<evidence type="ECO:0000250" key="2">
    <source>
        <dbReference type="UniProtKB" id="Q8VDZ4"/>
    </source>
</evidence>
<evidence type="ECO:0000250" key="3">
    <source>
        <dbReference type="UniProtKB" id="Q9UIJ5"/>
    </source>
</evidence>
<evidence type="ECO:0000255" key="4"/>
<evidence type="ECO:0000255" key="5">
    <source>
        <dbReference type="PROSITE-ProRule" id="PRU00067"/>
    </source>
</evidence>
<evidence type="ECO:0000256" key="6">
    <source>
        <dbReference type="SAM" id="MobiDB-lite"/>
    </source>
</evidence>
<evidence type="ECO:0000305" key="7"/>
<sequence length="601" mass="67291">MAFQFSNNPESNETTNNPAPHVLGLPRPPSVGGISSRVTDMSEDGDQSQTNTMSSHVPHRHSVSRRGPPPARSSIASTSQITNRPGSSASRLSRTHIPSLAASGFFRPMSSQRLQAHRGRPATNHTVSTEDWGDQMNQNRRSLISNSTFPNSLSAADQEVPPSRGTEFTDPIIPDRIHSNASPTANTTTVRSESANLIRDRERPPHLNLKVDYKGTNENETPERSPLSFLSLQNRNAPADNRDSRAHARLSSADSSPQSIEKKPELAKSRNKGRNYEYFVGNTIFLGGGRFQNSRDKPVNIATGLLVLVPTGLFFGFSGPWLWHNISPAIPVLFAYVFYLCFSSFIHASVVDPGVIPRNLHQMPPVDPSQDPLAIGPPTNDWVMVKLATSDVAAMDVPVKYCKTCSIWRPPRCYHCRVCDNCIETLDHHCVWLNNCVGRRNYRYFFAFVSTSTLLALFLLGASLAHILVYRSREGISFSDAIDKWRVPFAMVIYGALAAPYPASLWAYHLFLVGRGETTREYLNSHKFAKADRHRPFTQGNVIRNWIAVFGRPRPPTYMQFKEYYQEGDQRLSTVKRRFLPRNTEPQNDIEMQHVPPPNSA</sequence>